<evidence type="ECO:0000250" key="1">
    <source>
        <dbReference type="UniProtKB" id="A6ND36"/>
    </source>
</evidence>
<evidence type="ECO:0000256" key="2">
    <source>
        <dbReference type="SAM" id="MobiDB-lite"/>
    </source>
</evidence>
<evidence type="ECO:0000305" key="3"/>
<reference key="1">
    <citation type="journal article" date="2005" name="Science">
        <title>The transcriptional landscape of the mammalian genome.</title>
        <authorList>
            <person name="Carninci P."/>
            <person name="Kasukawa T."/>
            <person name="Katayama S."/>
            <person name="Gough J."/>
            <person name="Frith M.C."/>
            <person name="Maeda N."/>
            <person name="Oyama R."/>
            <person name="Ravasi T."/>
            <person name="Lenhard B."/>
            <person name="Wells C."/>
            <person name="Kodzius R."/>
            <person name="Shimokawa K."/>
            <person name="Bajic V.B."/>
            <person name="Brenner S.E."/>
            <person name="Batalov S."/>
            <person name="Forrest A.R."/>
            <person name="Zavolan M."/>
            <person name="Davis M.J."/>
            <person name="Wilming L.G."/>
            <person name="Aidinis V."/>
            <person name="Allen J.E."/>
            <person name="Ambesi-Impiombato A."/>
            <person name="Apweiler R."/>
            <person name="Aturaliya R.N."/>
            <person name="Bailey T.L."/>
            <person name="Bansal M."/>
            <person name="Baxter L."/>
            <person name="Beisel K.W."/>
            <person name="Bersano T."/>
            <person name="Bono H."/>
            <person name="Chalk A.M."/>
            <person name="Chiu K.P."/>
            <person name="Choudhary V."/>
            <person name="Christoffels A."/>
            <person name="Clutterbuck D.R."/>
            <person name="Crowe M.L."/>
            <person name="Dalla E."/>
            <person name="Dalrymple B.P."/>
            <person name="de Bono B."/>
            <person name="Della Gatta G."/>
            <person name="di Bernardo D."/>
            <person name="Down T."/>
            <person name="Engstrom P."/>
            <person name="Fagiolini M."/>
            <person name="Faulkner G."/>
            <person name="Fletcher C.F."/>
            <person name="Fukushima T."/>
            <person name="Furuno M."/>
            <person name="Futaki S."/>
            <person name="Gariboldi M."/>
            <person name="Georgii-Hemming P."/>
            <person name="Gingeras T.R."/>
            <person name="Gojobori T."/>
            <person name="Green R.E."/>
            <person name="Gustincich S."/>
            <person name="Harbers M."/>
            <person name="Hayashi Y."/>
            <person name="Hensch T.K."/>
            <person name="Hirokawa N."/>
            <person name="Hill D."/>
            <person name="Huminiecki L."/>
            <person name="Iacono M."/>
            <person name="Ikeo K."/>
            <person name="Iwama A."/>
            <person name="Ishikawa T."/>
            <person name="Jakt M."/>
            <person name="Kanapin A."/>
            <person name="Katoh M."/>
            <person name="Kawasawa Y."/>
            <person name="Kelso J."/>
            <person name="Kitamura H."/>
            <person name="Kitano H."/>
            <person name="Kollias G."/>
            <person name="Krishnan S.P."/>
            <person name="Kruger A."/>
            <person name="Kummerfeld S.K."/>
            <person name="Kurochkin I.V."/>
            <person name="Lareau L.F."/>
            <person name="Lazarevic D."/>
            <person name="Lipovich L."/>
            <person name="Liu J."/>
            <person name="Liuni S."/>
            <person name="McWilliam S."/>
            <person name="Madan Babu M."/>
            <person name="Madera M."/>
            <person name="Marchionni L."/>
            <person name="Matsuda H."/>
            <person name="Matsuzawa S."/>
            <person name="Miki H."/>
            <person name="Mignone F."/>
            <person name="Miyake S."/>
            <person name="Morris K."/>
            <person name="Mottagui-Tabar S."/>
            <person name="Mulder N."/>
            <person name="Nakano N."/>
            <person name="Nakauchi H."/>
            <person name="Ng P."/>
            <person name="Nilsson R."/>
            <person name="Nishiguchi S."/>
            <person name="Nishikawa S."/>
            <person name="Nori F."/>
            <person name="Ohara O."/>
            <person name="Okazaki Y."/>
            <person name="Orlando V."/>
            <person name="Pang K.C."/>
            <person name="Pavan W.J."/>
            <person name="Pavesi G."/>
            <person name="Pesole G."/>
            <person name="Petrovsky N."/>
            <person name="Piazza S."/>
            <person name="Reed J."/>
            <person name="Reid J.F."/>
            <person name="Ring B.Z."/>
            <person name="Ringwald M."/>
            <person name="Rost B."/>
            <person name="Ruan Y."/>
            <person name="Salzberg S.L."/>
            <person name="Sandelin A."/>
            <person name="Schneider C."/>
            <person name="Schoenbach C."/>
            <person name="Sekiguchi K."/>
            <person name="Semple C.A."/>
            <person name="Seno S."/>
            <person name="Sessa L."/>
            <person name="Sheng Y."/>
            <person name="Shibata Y."/>
            <person name="Shimada H."/>
            <person name="Shimada K."/>
            <person name="Silva D."/>
            <person name="Sinclair B."/>
            <person name="Sperling S."/>
            <person name="Stupka E."/>
            <person name="Sugiura K."/>
            <person name="Sultana R."/>
            <person name="Takenaka Y."/>
            <person name="Taki K."/>
            <person name="Tammoja K."/>
            <person name="Tan S.L."/>
            <person name="Tang S."/>
            <person name="Taylor M.S."/>
            <person name="Tegner J."/>
            <person name="Teichmann S.A."/>
            <person name="Ueda H.R."/>
            <person name="van Nimwegen E."/>
            <person name="Verardo R."/>
            <person name="Wei C.L."/>
            <person name="Yagi K."/>
            <person name="Yamanishi H."/>
            <person name="Zabarovsky E."/>
            <person name="Zhu S."/>
            <person name="Zimmer A."/>
            <person name="Hide W."/>
            <person name="Bult C."/>
            <person name="Grimmond S.M."/>
            <person name="Teasdale R.D."/>
            <person name="Liu E.T."/>
            <person name="Brusic V."/>
            <person name="Quackenbush J."/>
            <person name="Wahlestedt C."/>
            <person name="Mattick J.S."/>
            <person name="Hume D.A."/>
            <person name="Kai C."/>
            <person name="Sasaki D."/>
            <person name="Tomaru Y."/>
            <person name="Fukuda S."/>
            <person name="Kanamori-Katayama M."/>
            <person name="Suzuki M."/>
            <person name="Aoki J."/>
            <person name="Arakawa T."/>
            <person name="Iida J."/>
            <person name="Imamura K."/>
            <person name="Itoh M."/>
            <person name="Kato T."/>
            <person name="Kawaji H."/>
            <person name="Kawagashira N."/>
            <person name="Kawashima T."/>
            <person name="Kojima M."/>
            <person name="Kondo S."/>
            <person name="Konno H."/>
            <person name="Nakano K."/>
            <person name="Ninomiya N."/>
            <person name="Nishio T."/>
            <person name="Okada M."/>
            <person name="Plessy C."/>
            <person name="Shibata K."/>
            <person name="Shiraki T."/>
            <person name="Suzuki S."/>
            <person name="Tagami M."/>
            <person name="Waki K."/>
            <person name="Watahiki A."/>
            <person name="Okamura-Oho Y."/>
            <person name="Suzuki H."/>
            <person name="Kawai J."/>
            <person name="Hayashizaki Y."/>
        </authorList>
    </citation>
    <scope>NUCLEOTIDE SEQUENCE [LARGE SCALE MRNA]</scope>
    <source>
        <strain>C57BL/6J</strain>
        <tissue>Skin</tissue>
    </source>
</reference>
<reference key="2">
    <citation type="journal article" date="2009" name="PLoS Biol.">
        <title>Lineage-specific biology revealed by a finished genome assembly of the mouse.</title>
        <authorList>
            <person name="Church D.M."/>
            <person name="Goodstadt L."/>
            <person name="Hillier L.W."/>
            <person name="Zody M.C."/>
            <person name="Goldstein S."/>
            <person name="She X."/>
            <person name="Bult C.J."/>
            <person name="Agarwala R."/>
            <person name="Cherry J.L."/>
            <person name="DiCuccio M."/>
            <person name="Hlavina W."/>
            <person name="Kapustin Y."/>
            <person name="Meric P."/>
            <person name="Maglott D."/>
            <person name="Birtle Z."/>
            <person name="Marques A.C."/>
            <person name="Graves T."/>
            <person name="Zhou S."/>
            <person name="Teague B."/>
            <person name="Potamousis K."/>
            <person name="Churas C."/>
            <person name="Place M."/>
            <person name="Herschleb J."/>
            <person name="Runnheim R."/>
            <person name="Forrest D."/>
            <person name="Amos-Landgraf J."/>
            <person name="Schwartz D.C."/>
            <person name="Cheng Z."/>
            <person name="Lindblad-Toh K."/>
            <person name="Eichler E.E."/>
            <person name="Ponting C.P."/>
        </authorList>
    </citation>
    <scope>NUCLEOTIDE SEQUENCE [LARGE SCALE GENOMIC DNA]</scope>
    <source>
        <strain>C57BL/6J</strain>
    </source>
</reference>
<reference key="3">
    <citation type="journal article" date="2004" name="Genome Res.">
        <title>The status, quality, and expansion of the NIH full-length cDNA project: the Mammalian Gene Collection (MGC).</title>
        <authorList>
            <consortium name="The MGC Project Team"/>
        </authorList>
    </citation>
    <scope>NUCLEOTIDE SEQUENCE [LARGE SCALE MRNA]</scope>
    <source>
        <strain>C57BL/6J</strain>
        <tissue>Embryo</tissue>
    </source>
</reference>
<reference key="4">
    <citation type="journal article" date="2010" name="Cell">
        <title>A tissue-specific atlas of mouse protein phosphorylation and expression.</title>
        <authorList>
            <person name="Huttlin E.L."/>
            <person name="Jedrychowski M.P."/>
            <person name="Elias J.E."/>
            <person name="Goswami T."/>
            <person name="Rad R."/>
            <person name="Beausoleil S.A."/>
            <person name="Villen J."/>
            <person name="Haas W."/>
            <person name="Sowa M.E."/>
            <person name="Gygi S.P."/>
        </authorList>
    </citation>
    <scope>IDENTIFICATION BY MASS SPECTROMETRY [LARGE SCALE ANALYSIS]</scope>
    <source>
        <tissue>Kidney</tissue>
        <tissue>Pancreas</tissue>
    </source>
</reference>
<comment type="function">
    <text evidence="1">Substrate for type I BMP receptor kinase involved in regulation of some target genes of the BMP signaling pathway. Also regulates the expression of several non-BMP target genes, suggesting a role in other signaling pathways.</text>
</comment>
<comment type="subunit">
    <text evidence="1">Interacts with SMAD1 (via MH2 domain); in a SMAD4-independent manner (By similarity). Directly interacts (via DUF1669) with casein kinase isoforms CSNK1A1 and CSNK1A1L (By similarity).</text>
</comment>
<comment type="subcellular location">
    <subcellularLocation>
        <location evidence="1">Cytoplasm</location>
        <location evidence="1">Cytosol</location>
    </subcellularLocation>
    <subcellularLocation>
        <location evidence="1">Nucleus</location>
    </subcellularLocation>
    <text evidence="1">Detected predominantly in the cytosol. Upon BMP stimulation, a small portion localizes the nucleus.</text>
</comment>
<comment type="domain">
    <text evidence="1">All members of the FAM83 family of proteins share a conserved N-terminal DUF1669 (domain of unknown function 1669) domain of about 300 amino acids. This domain mediates the interaction with casein kinase 1 (CK1) isoforms. Therefore, it has been proposed to rename DUF1669 the polypeptide anchor of CK1 domain.</text>
</comment>
<comment type="PTM">
    <text evidence="1">BMP signaling induces the phosphorylation by BMPR1A at Ser-609, Ser-613 and Ser-615. Phosphorylation at Ser-609 is necessary for the activation of SMAD4-independent BMP target genes such as NEDD9 and ASNS.</text>
</comment>
<comment type="PTM">
    <text evidence="1">Phosphorylated by CSNK1A1.</text>
</comment>
<comment type="similarity">
    <text evidence="3">Belongs to the FAM83 family.</text>
</comment>
<comment type="sequence caution" evidence="3">
    <conflict type="frameshift">
        <sequence resource="EMBL-CDS" id="BAC26012"/>
    </conflict>
</comment>
<dbReference type="EMBL" id="AK028566">
    <property type="protein sequence ID" value="BAC26012.1"/>
    <property type="status" value="ALT_FRAME"/>
    <property type="molecule type" value="mRNA"/>
</dbReference>
<dbReference type="EMBL" id="AL596209">
    <property type="status" value="NOT_ANNOTATED_CDS"/>
    <property type="molecule type" value="Genomic_DNA"/>
</dbReference>
<dbReference type="EMBL" id="BC085279">
    <property type="protein sequence ID" value="AAH85279.1"/>
    <property type="molecule type" value="mRNA"/>
</dbReference>
<dbReference type="CCDS" id="CCDS36175.1"/>
<dbReference type="RefSeq" id="NP_848733.2">
    <property type="nucleotide sequence ID" value="NM_178618.3"/>
</dbReference>
<dbReference type="RefSeq" id="XP_006534182.1">
    <property type="nucleotide sequence ID" value="XM_006534119.5"/>
</dbReference>
<dbReference type="SMR" id="Q5SWY7"/>
<dbReference type="FunCoup" id="Q5SWY7">
    <property type="interactions" value="1482"/>
</dbReference>
<dbReference type="STRING" id="10090.ENSMUSP00000090697"/>
<dbReference type="GlyGen" id="Q5SWY7">
    <property type="glycosylation" value="2 sites"/>
</dbReference>
<dbReference type="iPTMnet" id="Q5SWY7"/>
<dbReference type="PhosphoSitePlus" id="Q5SWY7"/>
<dbReference type="PaxDb" id="10090-ENSMUSP00000090697"/>
<dbReference type="ProteomicsDB" id="266833"/>
<dbReference type="Antibodypedia" id="6816">
    <property type="antibodies" value="92 antibodies from 18 providers"/>
</dbReference>
<dbReference type="Ensembl" id="ENSMUST00000093019.6">
    <property type="protein sequence ID" value="ENSMUSP00000090697.6"/>
    <property type="gene ID" value="ENSMUSG00000042377.9"/>
</dbReference>
<dbReference type="GeneID" id="69640"/>
<dbReference type="KEGG" id="mmu:69640"/>
<dbReference type="UCSC" id="uc007jid.1">
    <property type="organism name" value="mouse"/>
</dbReference>
<dbReference type="AGR" id="MGI:1916890"/>
<dbReference type="CTD" id="644815"/>
<dbReference type="MGI" id="MGI:1916890">
    <property type="gene designation" value="Fam83g"/>
</dbReference>
<dbReference type="VEuPathDB" id="HostDB:ENSMUSG00000042377"/>
<dbReference type="eggNOG" id="ENOG502QS42">
    <property type="taxonomic scope" value="Eukaryota"/>
</dbReference>
<dbReference type="GeneTree" id="ENSGT00940000157932"/>
<dbReference type="HOGENOM" id="CLU_019056_1_0_1"/>
<dbReference type="InParanoid" id="Q5SWY7"/>
<dbReference type="OMA" id="PYWQSKA"/>
<dbReference type="OrthoDB" id="6103632at2759"/>
<dbReference type="PhylomeDB" id="Q5SWY7"/>
<dbReference type="TreeFam" id="TF330777"/>
<dbReference type="BioGRID-ORCS" id="69640">
    <property type="hits" value="2 hits in 76 CRISPR screens"/>
</dbReference>
<dbReference type="ChiTaRS" id="Fam83g">
    <property type="organism name" value="mouse"/>
</dbReference>
<dbReference type="PRO" id="PR:Q5SWY7"/>
<dbReference type="Proteomes" id="UP000000589">
    <property type="component" value="Chromosome 11"/>
</dbReference>
<dbReference type="RNAct" id="Q5SWY7">
    <property type="molecule type" value="protein"/>
</dbReference>
<dbReference type="Bgee" id="ENSMUSG00000042377">
    <property type="expression patterns" value="Expressed in lip and 78 other cell types or tissues"/>
</dbReference>
<dbReference type="GO" id="GO:0005829">
    <property type="term" value="C:cytosol"/>
    <property type="evidence" value="ECO:0000250"/>
    <property type="project" value="UniProtKB"/>
</dbReference>
<dbReference type="GO" id="GO:0005634">
    <property type="term" value="C:nucleus"/>
    <property type="evidence" value="ECO:0000250"/>
    <property type="project" value="UniProtKB"/>
</dbReference>
<dbReference type="GO" id="GO:0030509">
    <property type="term" value="P:BMP signaling pathway"/>
    <property type="evidence" value="ECO:0000250"/>
    <property type="project" value="UniProtKB"/>
</dbReference>
<dbReference type="FunFam" id="3.30.870.10:FF:000004">
    <property type="entry name" value="protein FAM83H isoform X2"/>
    <property type="match status" value="1"/>
</dbReference>
<dbReference type="Gene3D" id="3.30.870.10">
    <property type="entry name" value="Endonuclease Chain A"/>
    <property type="match status" value="1"/>
</dbReference>
<dbReference type="InterPro" id="IPR050944">
    <property type="entry name" value="FAM83"/>
</dbReference>
<dbReference type="InterPro" id="IPR012461">
    <property type="entry name" value="SACK1"/>
</dbReference>
<dbReference type="PANTHER" id="PTHR16181">
    <property type="entry name" value="PROTEIN FAM83A-RELATED"/>
    <property type="match status" value="1"/>
</dbReference>
<dbReference type="PANTHER" id="PTHR16181:SF29">
    <property type="entry name" value="PROTEIN FAM83A-RELATED"/>
    <property type="match status" value="1"/>
</dbReference>
<dbReference type="Pfam" id="PF07894">
    <property type="entry name" value="SACK1"/>
    <property type="match status" value="1"/>
</dbReference>
<dbReference type="SUPFAM" id="SSF56024">
    <property type="entry name" value="Phospholipase D/nuclease"/>
    <property type="match status" value="1"/>
</dbReference>
<name>FA83G_MOUSE</name>
<protein>
    <recommendedName>
        <fullName>Protein FAM83G</fullName>
    </recommendedName>
</protein>
<keyword id="KW-0007">Acetylation</keyword>
<keyword id="KW-0963">Cytoplasm</keyword>
<keyword id="KW-0539">Nucleus</keyword>
<keyword id="KW-0597">Phosphoprotein</keyword>
<keyword id="KW-1185">Reference proteome</keyword>
<sequence length="812" mass="89830">MAFSQVQCLDDNHVNWRSSESKPEFFYSEEQRLALEALVARGRDAFYEVLKRENIRDFLSELELSRIVEAIEVYDPGSEDPRVSGRRPEPQDNGGADASEETSAAGGPPATETLPSLEYWPQKSDRSIPQLDLGWPDTIAYRGVTRASVYMQPPIDGQPHIKEVVRKMVSQAQKVIAVVMDMFTDVDIFKDLLDAGFKRKVAVYIIVDESNVKYFLHMCERARMHLGHLKNLRVRSSGGTEFFTRSATKFKGVLAQKFMFVDGDRAVCGSYSFTWSAARTDRNVISVLSGQVVEMFDRQFQELYLMSQSVSLKDIPMEKEPEPEPIVLPSVVPLVPTGTMAKKLVNPKYALVKAKSVDEIAKSSSDKQEVTRPPGLRGPAVAERPGDLSELLPPVHPGLLNLERANMFEYLPTWVEPDPEPGSDILGYINIIDPNIWNPQPNQMNRIKIRDTAHASAQHQLWKQSQGARPCPAPCPPPAPRDSQGVVPAENGFPQGNPEPQAPVPKPRTVPVASVLARDGSDIGWALDTPEKETPQNGIDPRLPSTASESEVPQQQHSSMTQDDPDGLERGLPNGLDEDEDDDDDYVTLSDQDSLSGSSGPGPGHRRPSVASSMSDEYFEVRERSVPLQRRHSEQMANGPGHPPRRQLSAPHVTRGTFGGPLSSPLWAQGRSREDVDASRIQGQRPMDRQAQGQHFHRHGSTTSRTPGPPRFRPAADGTQSSSKKASPAAAGPHHWQPKGSPTPRMLPDPGSPRPTRNTRLRAELRATEEHASPFGIPYSKLSQSKHLKARAGGSQWAPSDSKRRARDHKEP</sequence>
<proteinExistence type="evidence at protein level"/>
<accession>Q5SWY7</accession>
<accession>Q5U437</accession>
<accession>Q8C1B0</accession>
<gene>
    <name type="primary">Fam83g</name>
</gene>
<organism>
    <name type="scientific">Mus musculus</name>
    <name type="common">Mouse</name>
    <dbReference type="NCBI Taxonomy" id="10090"/>
    <lineage>
        <taxon>Eukaryota</taxon>
        <taxon>Metazoa</taxon>
        <taxon>Chordata</taxon>
        <taxon>Craniata</taxon>
        <taxon>Vertebrata</taxon>
        <taxon>Euteleostomi</taxon>
        <taxon>Mammalia</taxon>
        <taxon>Eutheria</taxon>
        <taxon>Euarchontoglires</taxon>
        <taxon>Glires</taxon>
        <taxon>Rodentia</taxon>
        <taxon>Myomorpha</taxon>
        <taxon>Muroidea</taxon>
        <taxon>Muridae</taxon>
        <taxon>Murinae</taxon>
        <taxon>Mus</taxon>
        <taxon>Mus</taxon>
    </lineage>
</organism>
<feature type="initiator methionine" description="Removed" evidence="1">
    <location>
        <position position="1"/>
    </location>
</feature>
<feature type="chain" id="PRO_0000330818" description="Protein FAM83G">
    <location>
        <begin position="2"/>
        <end position="812"/>
    </location>
</feature>
<feature type="region of interest" description="DUF1669" evidence="1">
    <location>
        <begin position="2"/>
        <end position="312"/>
    </location>
</feature>
<feature type="region of interest" description="Disordered" evidence="2">
    <location>
        <begin position="76"/>
        <end position="119"/>
    </location>
</feature>
<feature type="region of interest" description="Disordered" evidence="2">
    <location>
        <begin position="362"/>
        <end position="389"/>
    </location>
</feature>
<feature type="region of interest" description="Disordered" evidence="2">
    <location>
        <begin position="455"/>
        <end position="509"/>
    </location>
</feature>
<feature type="region of interest" description="Disordered" evidence="2">
    <location>
        <begin position="521"/>
        <end position="812"/>
    </location>
</feature>
<feature type="compositionally biased region" description="Basic and acidic residues" evidence="2">
    <location>
        <begin position="79"/>
        <end position="90"/>
    </location>
</feature>
<feature type="compositionally biased region" description="Polar residues" evidence="2">
    <location>
        <begin position="455"/>
        <end position="467"/>
    </location>
</feature>
<feature type="compositionally biased region" description="Pro residues" evidence="2">
    <location>
        <begin position="471"/>
        <end position="480"/>
    </location>
</feature>
<feature type="compositionally biased region" description="Polar residues" evidence="2">
    <location>
        <begin position="545"/>
        <end position="562"/>
    </location>
</feature>
<feature type="compositionally biased region" description="Acidic residues" evidence="2">
    <location>
        <begin position="576"/>
        <end position="586"/>
    </location>
</feature>
<feature type="compositionally biased region" description="Low complexity" evidence="2">
    <location>
        <begin position="589"/>
        <end position="598"/>
    </location>
</feature>
<feature type="compositionally biased region" description="Low complexity" evidence="2">
    <location>
        <begin position="721"/>
        <end position="731"/>
    </location>
</feature>
<feature type="compositionally biased region" description="Basic and acidic residues" evidence="2">
    <location>
        <begin position="761"/>
        <end position="772"/>
    </location>
</feature>
<feature type="modified residue" description="N-acetylalanine" evidence="1">
    <location>
        <position position="2"/>
    </location>
</feature>
<feature type="modified residue" description="Phosphoserine" evidence="1">
    <location>
        <position position="4"/>
    </location>
</feature>
<feature type="modified residue" description="Phosphoserine" evidence="1">
    <location>
        <position position="124"/>
    </location>
</feature>
<feature type="modified residue" description="Phosphoserine" evidence="1">
    <location>
        <position position="127"/>
    </location>
</feature>
<feature type="modified residue" description="Phosphoserine" evidence="1">
    <location>
        <position position="356"/>
    </location>
</feature>
<feature type="modified residue" description="Phosphoserine" evidence="1">
    <location>
        <position position="609"/>
    </location>
</feature>
<feature type="modified residue" description="Phosphoserine" evidence="1">
    <location>
        <position position="613"/>
    </location>
</feature>
<feature type="modified residue" description="Phosphoserine" evidence="1">
    <location>
        <position position="615"/>
    </location>
</feature>
<feature type="modified residue" description="Phosphoserine" evidence="1">
    <location>
        <position position="649"/>
    </location>
</feature>
<feature type="sequence conflict" description="In Ref. 3; AAH85279." evidence="3" ref="3">
    <original>S</original>
    <variation>F</variation>
    <location>
        <position position="18"/>
    </location>
</feature>
<feature type="sequence conflict" description="In Ref. 1; BAC26012." evidence="3" ref="1">
    <original>L</original>
    <variation>V</variation>
    <location>
        <position position="747"/>
    </location>
</feature>
<feature type="sequence conflict" description="In Ref. 3; AAH85279." evidence="3" ref="3">
    <original>S</original>
    <variation>L</variation>
    <location>
        <position position="800"/>
    </location>
</feature>